<keyword id="KW-0963">Cytoplasm</keyword>
<keyword id="KW-0648">Protein biosynthesis</keyword>
<keyword id="KW-1185">Reference proteome</keyword>
<comment type="function">
    <text evidence="1">Responsible for the release of ribosomes from messenger RNA at the termination of protein biosynthesis. May increase the efficiency of translation by recycling ribosomes from one round of translation to another.</text>
</comment>
<comment type="subcellular location">
    <subcellularLocation>
        <location evidence="1">Cytoplasm</location>
    </subcellularLocation>
</comment>
<comment type="similarity">
    <text evidence="1">Belongs to the RRF family.</text>
</comment>
<feature type="chain" id="PRO_1000074603" description="Ribosome-recycling factor">
    <location>
        <begin position="1"/>
        <end position="185"/>
    </location>
</feature>
<gene>
    <name evidence="1" type="primary">frr</name>
    <name type="ordered locus">Ssed_3158</name>
</gene>
<proteinExistence type="inferred from homology"/>
<dbReference type="EMBL" id="CP000821">
    <property type="protein sequence ID" value="ABV37762.1"/>
    <property type="molecule type" value="Genomic_DNA"/>
</dbReference>
<dbReference type="RefSeq" id="WP_012143492.1">
    <property type="nucleotide sequence ID" value="NC_009831.1"/>
</dbReference>
<dbReference type="SMR" id="A8FY39"/>
<dbReference type="STRING" id="425104.Ssed_3158"/>
<dbReference type="KEGG" id="sse:Ssed_3158"/>
<dbReference type="eggNOG" id="COG0233">
    <property type="taxonomic scope" value="Bacteria"/>
</dbReference>
<dbReference type="HOGENOM" id="CLU_073981_2_1_6"/>
<dbReference type="OrthoDB" id="9804006at2"/>
<dbReference type="Proteomes" id="UP000002015">
    <property type="component" value="Chromosome"/>
</dbReference>
<dbReference type="GO" id="GO:0005829">
    <property type="term" value="C:cytosol"/>
    <property type="evidence" value="ECO:0007669"/>
    <property type="project" value="GOC"/>
</dbReference>
<dbReference type="GO" id="GO:0043023">
    <property type="term" value="F:ribosomal large subunit binding"/>
    <property type="evidence" value="ECO:0007669"/>
    <property type="project" value="TreeGrafter"/>
</dbReference>
<dbReference type="GO" id="GO:0002184">
    <property type="term" value="P:cytoplasmic translational termination"/>
    <property type="evidence" value="ECO:0007669"/>
    <property type="project" value="TreeGrafter"/>
</dbReference>
<dbReference type="CDD" id="cd00520">
    <property type="entry name" value="RRF"/>
    <property type="match status" value="1"/>
</dbReference>
<dbReference type="FunFam" id="1.10.132.20:FF:000001">
    <property type="entry name" value="Ribosome-recycling factor"/>
    <property type="match status" value="1"/>
</dbReference>
<dbReference type="FunFam" id="3.30.1360.40:FF:000001">
    <property type="entry name" value="Ribosome-recycling factor"/>
    <property type="match status" value="1"/>
</dbReference>
<dbReference type="Gene3D" id="3.30.1360.40">
    <property type="match status" value="1"/>
</dbReference>
<dbReference type="Gene3D" id="1.10.132.20">
    <property type="entry name" value="Ribosome-recycling factor"/>
    <property type="match status" value="1"/>
</dbReference>
<dbReference type="HAMAP" id="MF_00040">
    <property type="entry name" value="RRF"/>
    <property type="match status" value="1"/>
</dbReference>
<dbReference type="InterPro" id="IPR002661">
    <property type="entry name" value="Ribosome_recyc_fac"/>
</dbReference>
<dbReference type="InterPro" id="IPR023584">
    <property type="entry name" value="Ribosome_recyc_fac_dom"/>
</dbReference>
<dbReference type="InterPro" id="IPR036191">
    <property type="entry name" value="RRF_sf"/>
</dbReference>
<dbReference type="NCBIfam" id="TIGR00496">
    <property type="entry name" value="frr"/>
    <property type="match status" value="1"/>
</dbReference>
<dbReference type="PANTHER" id="PTHR20982:SF3">
    <property type="entry name" value="MITOCHONDRIAL RIBOSOME RECYCLING FACTOR PSEUDO 1"/>
    <property type="match status" value="1"/>
</dbReference>
<dbReference type="PANTHER" id="PTHR20982">
    <property type="entry name" value="RIBOSOME RECYCLING FACTOR"/>
    <property type="match status" value="1"/>
</dbReference>
<dbReference type="Pfam" id="PF01765">
    <property type="entry name" value="RRF"/>
    <property type="match status" value="1"/>
</dbReference>
<dbReference type="SUPFAM" id="SSF55194">
    <property type="entry name" value="Ribosome recycling factor, RRF"/>
    <property type="match status" value="1"/>
</dbReference>
<accession>A8FY39</accession>
<sequence>MINEIKNDAKSRMEKCVESTKTQMAKVRTGRAHPSLLDTIKVSYYGSMTPLKQVGNVSIEDSRTLAVNVFDSTMIQAVEKAIMSSDLGLNPMSAGATIRIPLPALTEERRKDLIKVVRAEAENGRIAVRNVRRDANSDVKSLEKEKECTEDDVRRTEDDVQKFTDAHIKLIDEILTAKEAELMEV</sequence>
<protein>
    <recommendedName>
        <fullName evidence="1">Ribosome-recycling factor</fullName>
        <shortName evidence="1">RRF</shortName>
    </recommendedName>
    <alternativeName>
        <fullName evidence="1">Ribosome-releasing factor</fullName>
    </alternativeName>
</protein>
<evidence type="ECO:0000255" key="1">
    <source>
        <dbReference type="HAMAP-Rule" id="MF_00040"/>
    </source>
</evidence>
<name>RRF_SHESH</name>
<reference key="1">
    <citation type="submission" date="2007-08" db="EMBL/GenBank/DDBJ databases">
        <title>Complete sequence of Shewanella sediminis HAW-EB3.</title>
        <authorList>
            <consortium name="US DOE Joint Genome Institute"/>
            <person name="Copeland A."/>
            <person name="Lucas S."/>
            <person name="Lapidus A."/>
            <person name="Barry K."/>
            <person name="Glavina del Rio T."/>
            <person name="Dalin E."/>
            <person name="Tice H."/>
            <person name="Pitluck S."/>
            <person name="Chertkov O."/>
            <person name="Brettin T."/>
            <person name="Bruce D."/>
            <person name="Detter J.C."/>
            <person name="Han C."/>
            <person name="Schmutz J."/>
            <person name="Larimer F."/>
            <person name="Land M."/>
            <person name="Hauser L."/>
            <person name="Kyrpides N."/>
            <person name="Kim E."/>
            <person name="Zhao J.-S."/>
            <person name="Richardson P."/>
        </authorList>
    </citation>
    <scope>NUCLEOTIDE SEQUENCE [LARGE SCALE GENOMIC DNA]</scope>
    <source>
        <strain>HAW-EB3</strain>
    </source>
</reference>
<organism>
    <name type="scientific">Shewanella sediminis (strain HAW-EB3)</name>
    <dbReference type="NCBI Taxonomy" id="425104"/>
    <lineage>
        <taxon>Bacteria</taxon>
        <taxon>Pseudomonadati</taxon>
        <taxon>Pseudomonadota</taxon>
        <taxon>Gammaproteobacteria</taxon>
        <taxon>Alteromonadales</taxon>
        <taxon>Shewanellaceae</taxon>
        <taxon>Shewanella</taxon>
    </lineage>
</organism>